<feature type="chain" id="PRO_0000287896" description="Retinoic acid receptor RXR-alpha-A">
    <location>
        <begin position="1"/>
        <end position="430"/>
    </location>
</feature>
<feature type="domain" description="NR LBD" evidence="6">
    <location>
        <begin position="195"/>
        <end position="426"/>
    </location>
</feature>
<feature type="DNA-binding region" description="Nuclear receptor" evidence="5">
    <location>
        <begin position="100"/>
        <end position="175"/>
    </location>
</feature>
<feature type="zinc finger region" description="NR C4-type" evidence="5">
    <location>
        <begin position="103"/>
        <end position="123"/>
    </location>
</feature>
<feature type="zinc finger region" description="NR C4-type" evidence="5">
    <location>
        <begin position="139"/>
        <end position="158"/>
    </location>
</feature>
<feature type="region of interest" description="Modulating" evidence="1">
    <location>
        <begin position="1"/>
        <end position="99"/>
    </location>
</feature>
<feature type="region of interest" description="Disordered" evidence="7">
    <location>
        <begin position="1"/>
        <end position="25"/>
    </location>
</feature>
<feature type="region of interest" description="Disordered" evidence="7">
    <location>
        <begin position="48"/>
        <end position="73"/>
    </location>
</feature>
<feature type="region of interest" description="Nuclear localization signal" evidence="2">
    <location>
        <begin position="128"/>
        <end position="133"/>
    </location>
</feature>
<feature type="region of interest" description="Disordered" evidence="7">
    <location>
        <begin position="174"/>
        <end position="196"/>
    </location>
</feature>
<feature type="region of interest" description="Hinge" evidence="3">
    <location>
        <begin position="176"/>
        <end position="192"/>
    </location>
</feature>
<feature type="region of interest" description="Required for nuclear export" evidence="2">
    <location>
        <begin position="316"/>
        <end position="336"/>
    </location>
</feature>
<feature type="region of interest" description="AF-2" evidence="6">
    <location>
        <begin position="415"/>
        <end position="426"/>
    </location>
</feature>
<feature type="compositionally biased region" description="Low complexity" evidence="7">
    <location>
        <begin position="1"/>
        <end position="20"/>
    </location>
</feature>
<feature type="compositionally biased region" description="Polar residues" evidence="7">
    <location>
        <begin position="58"/>
        <end position="72"/>
    </location>
</feature>
<feature type="compositionally biased region" description="Basic and acidic residues" evidence="7">
    <location>
        <begin position="174"/>
        <end position="186"/>
    </location>
</feature>
<feature type="binding site" evidence="2">
    <location>
        <position position="103"/>
    </location>
    <ligand>
        <name>Zn(2+)</name>
        <dbReference type="ChEBI" id="CHEBI:29105"/>
        <label>1</label>
    </ligand>
</feature>
<feature type="binding site" evidence="2">
    <location>
        <position position="106"/>
    </location>
    <ligand>
        <name>Zn(2+)</name>
        <dbReference type="ChEBI" id="CHEBI:29105"/>
        <label>1</label>
    </ligand>
</feature>
<feature type="binding site" evidence="2">
    <location>
        <position position="120"/>
    </location>
    <ligand>
        <name>Zn(2+)</name>
        <dbReference type="ChEBI" id="CHEBI:29105"/>
        <label>1</label>
    </ligand>
</feature>
<feature type="binding site" evidence="2">
    <location>
        <position position="123"/>
    </location>
    <ligand>
        <name>Zn(2+)</name>
        <dbReference type="ChEBI" id="CHEBI:29105"/>
        <label>1</label>
    </ligand>
</feature>
<feature type="binding site" evidence="2">
    <location>
        <position position="139"/>
    </location>
    <ligand>
        <name>Zn(2+)</name>
        <dbReference type="ChEBI" id="CHEBI:29105"/>
        <label>2</label>
    </ligand>
</feature>
<feature type="binding site" evidence="2">
    <location>
        <position position="145"/>
    </location>
    <ligand>
        <name>Zn(2+)</name>
        <dbReference type="ChEBI" id="CHEBI:29105"/>
        <label>2</label>
    </ligand>
</feature>
<feature type="binding site" evidence="2">
    <location>
        <position position="155"/>
    </location>
    <ligand>
        <name>Zn(2+)</name>
        <dbReference type="ChEBI" id="CHEBI:29105"/>
        <label>2</label>
    </ligand>
</feature>
<feature type="binding site" evidence="2">
    <location>
        <position position="158"/>
    </location>
    <ligand>
        <name>Zn(2+)</name>
        <dbReference type="ChEBI" id="CHEBI:29105"/>
        <label>2</label>
    </ligand>
</feature>
<feature type="binding site" evidence="2">
    <location>
        <position position="284"/>
    </location>
    <ligand>
        <name>9-cis-retinoate</name>
        <dbReference type="ChEBI" id="CHEBI:78630"/>
    </ligand>
</feature>
<feature type="binding site" evidence="2">
    <location>
        <position position="284"/>
    </location>
    <ligand>
        <name>all-trans-retinoate</name>
        <dbReference type="ChEBI" id="CHEBI:35291"/>
    </ligand>
</feature>
<feature type="binding site" evidence="2">
    <location>
        <position position="295"/>
    </location>
    <ligand>
        <name>9-cis-retinoate</name>
        <dbReference type="ChEBI" id="CHEBI:78630"/>
    </ligand>
</feature>
<feature type="binding site" evidence="2">
    <location>
        <position position="295"/>
    </location>
    <ligand>
        <name>all-trans-retinoate</name>
        <dbReference type="ChEBI" id="CHEBI:35291"/>
    </ligand>
</feature>
<accession>A2T929</accession>
<accession>Q1L677</accession>
<comment type="function">
    <text evidence="2">Receptor for retinoic acid that acts as a transcription factor. Forms homo- or heterodimers with retinoic acid receptors (rars) and binds to target response elements in response to their ligands, all-trans or 9-cis retinoic acid, to regulate gene expression in various biological processes. The rar/rxr heterodimers bind to the retinoic acid response elements (RARE) composed of tandem 5'-AGGTCA-3' sites known as DR1-DR5 to regulate transcription. The high affinity ligand for rxrs is 9-cis retinoic acid. In the absence of ligand, the rar/rxr heterodimers associate with a multiprotein complex containing transcription corepressors that induce histone deacetylation, chromatin condensation and transcriptional suppression. On ligand binding, the corepressors dissociate from the receptors and coactivators are recruited leading to transcriptional activation.</text>
</comment>
<comment type="subunit">
    <text evidence="2">Homodimer. Heterodimer; with a rar molecule. Binds DNA preferentially as a rar/rxr heterodimer.</text>
</comment>
<comment type="subcellular location">
    <subcellularLocation>
        <location evidence="5">Nucleus</location>
    </subcellularLocation>
</comment>
<comment type="developmental stage">
    <text evidence="8 9">Expressed both maternally and zygotically. In the embryo, expressed in the posterior hindbrain and anterior spinal cord at the 5-somite stage, with expression increasing through to the 15-somite stage. At the 15-somite stage, also expressed in the tail bud region. At the 18-somite stage, also found in the third neural crest stream.</text>
</comment>
<comment type="domain">
    <text>Composed of three domains: a modulating N-terminal domain, a DNA-binding domain and a C-terminal ligand-binding domain.</text>
</comment>
<comment type="similarity">
    <text evidence="4">Belongs to the nuclear hormone receptor family. NR2 subfamily.</text>
</comment>
<comment type="sequence caution" evidence="10">
    <conflict type="erroneous initiation">
        <sequence resource="EMBL-CDS" id="ABM89229"/>
    </conflict>
    <text>Extended N-terminus.</text>
</comment>
<name>RXRAA_DANRE</name>
<organism>
    <name type="scientific">Danio rerio</name>
    <name type="common">Zebrafish</name>
    <name type="synonym">Brachydanio rerio</name>
    <dbReference type="NCBI Taxonomy" id="7955"/>
    <lineage>
        <taxon>Eukaryota</taxon>
        <taxon>Metazoa</taxon>
        <taxon>Chordata</taxon>
        <taxon>Craniata</taxon>
        <taxon>Vertebrata</taxon>
        <taxon>Euteleostomi</taxon>
        <taxon>Actinopterygii</taxon>
        <taxon>Neopterygii</taxon>
        <taxon>Teleostei</taxon>
        <taxon>Ostariophysi</taxon>
        <taxon>Cypriniformes</taxon>
        <taxon>Danionidae</taxon>
        <taxon>Danioninae</taxon>
        <taxon>Danio</taxon>
    </lineage>
</organism>
<proteinExistence type="evidence at transcript level"/>
<keyword id="KW-0238">DNA-binding</keyword>
<keyword id="KW-0479">Metal-binding</keyword>
<keyword id="KW-0539">Nucleus</keyword>
<keyword id="KW-0675">Receptor</keyword>
<keyword id="KW-1185">Reference proteome</keyword>
<keyword id="KW-0804">Transcription</keyword>
<keyword id="KW-0805">Transcription regulation</keyword>
<keyword id="KW-0862">Zinc</keyword>
<keyword id="KW-0863">Zinc-finger</keyword>
<sequence>MHPSLLSPTSLGPSGSLHSPISTLSSPMNGLGSPFSVISSPMGPHSMASPGVGYGPSISPQLNSHMNSVSSSEDIKPPLGLNGVMKVPAQPSGTPLSLTKHICAICGDRSSGKHYGVYSCEGCKGFFKRTVRKDLTYTCRDNKDCVIDKRQRNRCQYCRYQKCLAMGMKREAVQEERQRAKERSENEVESTSSANEDMPVEKILEAELAVEPKTETYIETNVPMPSNSPNDPVTNICQAADKQLFTLVEWAKRIPHFSELPLDDQVILLRAGWNELLIASFSHRSIAVKDGILLATGLHVHRNSAHSAGVGAIFDRVLTELVSKMRDMQMDKTELGCLRAIVLFNPDSKGLSNPGEVEALREKVYASLEAYCKHKYPEQPGRFAKLLLRLPALRSIGLKCLEHLFFFKLIGDTPIDTFLMEMLEAPHQMT</sequence>
<dbReference type="EMBL" id="EF028132">
    <property type="protein sequence ID" value="ABM89229.1"/>
    <property type="status" value="ALT_INIT"/>
    <property type="molecule type" value="mRNA"/>
</dbReference>
<dbReference type="EMBL" id="DQ017629">
    <property type="protein sequence ID" value="AAY85284.1"/>
    <property type="molecule type" value="mRNA"/>
</dbReference>
<dbReference type="SMR" id="A2T929"/>
<dbReference type="FunCoup" id="A2T929">
    <property type="interactions" value="1857"/>
</dbReference>
<dbReference type="STRING" id="7955.ENSDARP00000074930"/>
<dbReference type="PaxDb" id="7955-ENSDARP00000104454"/>
<dbReference type="PeptideAtlas" id="A2T929"/>
<dbReference type="AGR" id="ZFIN:ZDB-GENE-070314-2"/>
<dbReference type="ZFIN" id="ZDB-GENE-070314-2">
    <property type="gene designation" value="rxraa"/>
</dbReference>
<dbReference type="eggNOG" id="KOG3575">
    <property type="taxonomic scope" value="Eukaryota"/>
</dbReference>
<dbReference type="InParanoid" id="A2T929"/>
<dbReference type="OrthoDB" id="5873264at2759"/>
<dbReference type="PhylomeDB" id="A2T929"/>
<dbReference type="Reactome" id="R-DRE-159418">
    <property type="pathway name" value="Recycling of bile acids and salts"/>
</dbReference>
<dbReference type="Reactome" id="R-DRE-381340">
    <property type="pathway name" value="Transcriptional regulation of white adipocyte differentiation"/>
</dbReference>
<dbReference type="Reactome" id="R-DRE-400206">
    <property type="pathway name" value="Regulation of lipid metabolism by PPARalpha"/>
</dbReference>
<dbReference type="Reactome" id="R-DRE-4090294">
    <property type="pathway name" value="SUMOylation of intracellular receptors"/>
</dbReference>
<dbReference type="Reactome" id="R-DRE-5362517">
    <property type="pathway name" value="Signaling by Retinoic Acid"/>
</dbReference>
<dbReference type="Reactome" id="R-DRE-9616222">
    <property type="pathway name" value="Transcriptional regulation of granulopoiesis"/>
</dbReference>
<dbReference type="Reactome" id="R-DRE-9707564">
    <property type="pathway name" value="Cytoprotection by HMOX1"/>
</dbReference>
<dbReference type="Reactome" id="R-DRE-9841922">
    <property type="pathway name" value="MLL4 and MLL3 complexes regulate expression of PPARG target genes in adipogenesis and hepatic steatosis"/>
</dbReference>
<dbReference type="PRO" id="PR:A2T929"/>
<dbReference type="Proteomes" id="UP000000437">
    <property type="component" value="Unplaced"/>
</dbReference>
<dbReference type="GO" id="GO:0090575">
    <property type="term" value="C:RNA polymerase II transcription regulator complex"/>
    <property type="evidence" value="ECO:0000318"/>
    <property type="project" value="GO_Central"/>
</dbReference>
<dbReference type="GO" id="GO:0004879">
    <property type="term" value="F:nuclear receptor activity"/>
    <property type="evidence" value="ECO:0000318"/>
    <property type="project" value="GO_Central"/>
</dbReference>
<dbReference type="GO" id="GO:0003707">
    <property type="term" value="F:nuclear steroid receptor activity"/>
    <property type="evidence" value="ECO:0007669"/>
    <property type="project" value="InterPro"/>
</dbReference>
<dbReference type="GO" id="GO:0044323">
    <property type="term" value="F:retinoic acid-responsive element binding"/>
    <property type="evidence" value="ECO:0000318"/>
    <property type="project" value="GO_Central"/>
</dbReference>
<dbReference type="GO" id="GO:0008270">
    <property type="term" value="F:zinc ion binding"/>
    <property type="evidence" value="ECO:0007669"/>
    <property type="project" value="UniProtKB-KW"/>
</dbReference>
<dbReference type="GO" id="GO:0030154">
    <property type="term" value="P:cell differentiation"/>
    <property type="evidence" value="ECO:0000318"/>
    <property type="project" value="GO_Central"/>
</dbReference>
<dbReference type="GO" id="GO:0007399">
    <property type="term" value="P:nervous system development"/>
    <property type="evidence" value="ECO:0000318"/>
    <property type="project" value="GO_Central"/>
</dbReference>
<dbReference type="GO" id="GO:0045944">
    <property type="term" value="P:positive regulation of transcription by RNA polymerase II"/>
    <property type="evidence" value="ECO:0000318"/>
    <property type="project" value="GO_Central"/>
</dbReference>
<dbReference type="GO" id="GO:0048384">
    <property type="term" value="P:retinoic acid receptor signaling pathway"/>
    <property type="evidence" value="ECO:0000318"/>
    <property type="project" value="GO_Central"/>
</dbReference>
<dbReference type="CDD" id="cd06956">
    <property type="entry name" value="NR_DBD_RXR"/>
    <property type="match status" value="1"/>
</dbReference>
<dbReference type="CDD" id="cd06943">
    <property type="entry name" value="NR_LBD_RXR_like"/>
    <property type="match status" value="1"/>
</dbReference>
<dbReference type="FunFam" id="1.10.565.10:FF:000002">
    <property type="entry name" value="Retinoic acid receptor RXR-alpha"/>
    <property type="match status" value="1"/>
</dbReference>
<dbReference type="FunFam" id="3.30.50.10:FF:000005">
    <property type="entry name" value="Retinoic acid receptor RXR-alpha"/>
    <property type="match status" value="1"/>
</dbReference>
<dbReference type="Gene3D" id="3.30.50.10">
    <property type="entry name" value="Erythroid Transcription Factor GATA-1, subunit A"/>
    <property type="match status" value="1"/>
</dbReference>
<dbReference type="Gene3D" id="1.10.565.10">
    <property type="entry name" value="Retinoid X Receptor"/>
    <property type="match status" value="1"/>
</dbReference>
<dbReference type="InterPro" id="IPR035500">
    <property type="entry name" value="NHR-like_dom_sf"/>
</dbReference>
<dbReference type="InterPro" id="IPR021780">
    <property type="entry name" value="Nuc_recep-AF1"/>
</dbReference>
<dbReference type="InterPro" id="IPR000536">
    <property type="entry name" value="Nucl_hrmn_rcpt_lig-bd"/>
</dbReference>
<dbReference type="InterPro" id="IPR050274">
    <property type="entry name" value="Nuclear_hormone_rcpt_NR2"/>
</dbReference>
<dbReference type="InterPro" id="IPR001723">
    <property type="entry name" value="Nuclear_hrmn_rcpt"/>
</dbReference>
<dbReference type="InterPro" id="IPR000003">
    <property type="entry name" value="Retinoid-X_rcpt/HNF4"/>
</dbReference>
<dbReference type="InterPro" id="IPR001628">
    <property type="entry name" value="Znf_hrmn_rcpt"/>
</dbReference>
<dbReference type="InterPro" id="IPR013088">
    <property type="entry name" value="Znf_NHR/GATA"/>
</dbReference>
<dbReference type="PANTHER" id="PTHR24083">
    <property type="entry name" value="NUCLEAR HORMONE RECEPTOR"/>
    <property type="match status" value="1"/>
</dbReference>
<dbReference type="Pfam" id="PF00104">
    <property type="entry name" value="Hormone_recep"/>
    <property type="match status" value="1"/>
</dbReference>
<dbReference type="Pfam" id="PF11825">
    <property type="entry name" value="Nuc_recep-AF1"/>
    <property type="match status" value="1"/>
</dbReference>
<dbReference type="Pfam" id="PF00105">
    <property type="entry name" value="zf-C4"/>
    <property type="match status" value="1"/>
</dbReference>
<dbReference type="PRINTS" id="PR00545">
    <property type="entry name" value="RETINOIDXR"/>
</dbReference>
<dbReference type="PRINTS" id="PR00398">
    <property type="entry name" value="STRDHORMONER"/>
</dbReference>
<dbReference type="PRINTS" id="PR00047">
    <property type="entry name" value="STROIDFINGER"/>
</dbReference>
<dbReference type="SMART" id="SM00430">
    <property type="entry name" value="HOLI"/>
    <property type="match status" value="1"/>
</dbReference>
<dbReference type="SMART" id="SM00399">
    <property type="entry name" value="ZnF_C4"/>
    <property type="match status" value="1"/>
</dbReference>
<dbReference type="SUPFAM" id="SSF57716">
    <property type="entry name" value="Glucocorticoid receptor-like (DNA-binding domain)"/>
    <property type="match status" value="1"/>
</dbReference>
<dbReference type="SUPFAM" id="SSF48508">
    <property type="entry name" value="Nuclear receptor ligand-binding domain"/>
    <property type="match status" value="1"/>
</dbReference>
<dbReference type="PROSITE" id="PS51843">
    <property type="entry name" value="NR_LBD"/>
    <property type="match status" value="1"/>
</dbReference>
<dbReference type="PROSITE" id="PS00031">
    <property type="entry name" value="NUCLEAR_REC_DBD_1"/>
    <property type="match status" value="1"/>
</dbReference>
<dbReference type="PROSITE" id="PS51030">
    <property type="entry name" value="NUCLEAR_REC_DBD_2"/>
    <property type="match status" value="1"/>
</dbReference>
<reference evidence="10 12" key="1">
    <citation type="journal article" date="2007" name="Dev. Dyn.">
        <title>Comparison of the expression patterns of newly identified zebrafish retinoic acid and retinoid X receptors.</title>
        <authorList>
            <person name="Waxman J.S."/>
            <person name="Yelon D."/>
        </authorList>
    </citation>
    <scope>NUCLEOTIDE SEQUENCE [MRNA] OF 1-312</scope>
    <scope>DEVELOPMENTAL STAGE</scope>
</reference>
<reference evidence="10 11" key="2">
    <citation type="submission" date="2005-04" db="EMBL/GenBank/DDBJ databases">
        <title>Nuclear receptors expression during zebrafish development reveals an unsuspected link with nervous system and retina development.</title>
        <authorList>
            <person name="Bertrand S."/>
            <person name="Sachs L."/>
            <person name="Bardet P.-L."/>
            <person name="Bonnelye E."/>
            <person name="Dufraisse M."/>
            <person name="Escriva H."/>
            <person name="Haramis A.-P."/>
            <person name="Marchand O."/>
            <person name="Safi R."/>
            <person name="Vanacker J.-M."/>
            <person name="Zelus D."/>
            <person name="Thisse C."/>
            <person name="Thisse B."/>
            <person name="Laudet V."/>
        </authorList>
    </citation>
    <scope>NUCLEOTIDE SEQUENCE [MRNA] OF 66-430</scope>
</reference>
<reference key="3">
    <citation type="journal article" date="2007" name="PLoS Genet.">
        <title>Unexpected novel relational links uncovered by extensive developmental profiling of nuclear receptor expression.</title>
        <authorList>
            <person name="Bertrand S."/>
            <person name="Thisse B."/>
            <person name="Tavares R."/>
            <person name="Sachs L."/>
            <person name="Chaumot A."/>
            <person name="Bardet P.-L."/>
            <person name="Escriva H."/>
            <person name="Duffraisse M."/>
            <person name="Marchand O."/>
            <person name="Safi R."/>
            <person name="Thisse C."/>
            <person name="Laudet V."/>
        </authorList>
    </citation>
    <scope>DEVELOPMENTAL STAGE</scope>
</reference>
<gene>
    <name evidence="13" type="primary">rxraa</name>
    <name type="synonym">nr2b1a</name>
</gene>
<evidence type="ECO:0000250" key="1">
    <source>
        <dbReference type="UniProtKB" id="P10276"/>
    </source>
</evidence>
<evidence type="ECO:0000250" key="2">
    <source>
        <dbReference type="UniProtKB" id="P19793"/>
    </source>
</evidence>
<evidence type="ECO:0000250" key="3">
    <source>
        <dbReference type="UniProtKB" id="P28700"/>
    </source>
</evidence>
<evidence type="ECO:0000255" key="4"/>
<evidence type="ECO:0000255" key="5">
    <source>
        <dbReference type="PROSITE-ProRule" id="PRU00407"/>
    </source>
</evidence>
<evidence type="ECO:0000255" key="6">
    <source>
        <dbReference type="PROSITE-ProRule" id="PRU01189"/>
    </source>
</evidence>
<evidence type="ECO:0000256" key="7">
    <source>
        <dbReference type="SAM" id="MobiDB-lite"/>
    </source>
</evidence>
<evidence type="ECO:0000269" key="8">
    <source>
    </source>
</evidence>
<evidence type="ECO:0000269" key="9">
    <source>
    </source>
</evidence>
<evidence type="ECO:0000305" key="10"/>
<evidence type="ECO:0000312" key="11">
    <source>
        <dbReference type="EMBL" id="AAY85284.1"/>
    </source>
</evidence>
<evidence type="ECO:0000312" key="12">
    <source>
        <dbReference type="EMBL" id="ABM89229.1"/>
    </source>
</evidence>
<evidence type="ECO:0000312" key="13">
    <source>
        <dbReference type="ZFIN" id="ZDB-GENE-070314-2"/>
    </source>
</evidence>
<protein>
    <recommendedName>
        <fullName>Retinoic acid receptor RXR-alpha-A</fullName>
    </recommendedName>
    <alternativeName>
        <fullName>Nuclear receptor subfamily 2 group B member 1-A</fullName>
    </alternativeName>
    <alternativeName>
        <fullName>RXRalpha-B</fullName>
    </alternativeName>
    <alternativeName>
        <fullName>Retinoid X receptor alpha-A</fullName>
    </alternativeName>
</protein>